<feature type="chain" id="PRO_0000103838" description="Uncharacterized protein Mb1433c">
    <location>
        <begin position="1"/>
        <end position="85"/>
    </location>
</feature>
<feature type="region of interest" description="Disordered" evidence="1">
    <location>
        <begin position="64"/>
        <end position="85"/>
    </location>
</feature>
<feature type="compositionally biased region" description="Basic and acidic residues" evidence="1">
    <location>
        <begin position="64"/>
        <end position="76"/>
    </location>
</feature>
<keyword id="KW-1185">Reference proteome</keyword>
<name>Y1433_MYCBO</name>
<reference key="1">
    <citation type="journal article" date="2003" name="Proc. Natl. Acad. Sci. U.S.A.">
        <title>The complete genome sequence of Mycobacterium bovis.</title>
        <authorList>
            <person name="Garnier T."/>
            <person name="Eiglmeier K."/>
            <person name="Camus J.-C."/>
            <person name="Medina N."/>
            <person name="Mansoor H."/>
            <person name="Pryor M."/>
            <person name="Duthoy S."/>
            <person name="Grondin S."/>
            <person name="Lacroix C."/>
            <person name="Monsempe C."/>
            <person name="Simon S."/>
            <person name="Harris B."/>
            <person name="Atkin R."/>
            <person name="Doggett J."/>
            <person name="Mayes R."/>
            <person name="Keating L."/>
            <person name="Wheeler P.R."/>
            <person name="Parkhill J."/>
            <person name="Barrell B.G."/>
            <person name="Cole S.T."/>
            <person name="Gordon S.V."/>
            <person name="Hewinson R.G."/>
        </authorList>
    </citation>
    <scope>NUCLEOTIDE SEQUENCE [LARGE SCALE GENOMIC DNA]</scope>
    <source>
        <strain>ATCC BAA-935 / AF2122/97</strain>
    </source>
</reference>
<reference key="2">
    <citation type="journal article" date="2017" name="Genome Announc.">
        <title>Updated reference genome sequence and annotation of Mycobacterium bovis AF2122/97.</title>
        <authorList>
            <person name="Malone K.M."/>
            <person name="Farrell D."/>
            <person name="Stuber T.P."/>
            <person name="Schubert O.T."/>
            <person name="Aebersold R."/>
            <person name="Robbe-Austerman S."/>
            <person name="Gordon S.V."/>
        </authorList>
    </citation>
    <scope>NUCLEOTIDE SEQUENCE [LARGE SCALE GENOMIC DNA]</scope>
    <scope>GENOME REANNOTATION</scope>
    <source>
        <strain>ATCC BAA-935 / AF2122/97</strain>
    </source>
</reference>
<protein>
    <recommendedName>
        <fullName>Uncharacterized protein Mb1433c</fullName>
    </recommendedName>
</protein>
<proteinExistence type="predicted"/>
<evidence type="ECO:0000256" key="1">
    <source>
        <dbReference type="SAM" id="MobiDB-lite"/>
    </source>
</evidence>
<sequence length="85" mass="9444">MKRTNIYLDEEQTASLDKLAAQEGVSRAELIRLLLNRALTTAGDDLASDLQAINDSFGTLRHLDPPVRRSGGREQHLAQVWRATS</sequence>
<organism>
    <name type="scientific">Mycobacterium bovis (strain ATCC BAA-935 / AF2122/97)</name>
    <dbReference type="NCBI Taxonomy" id="233413"/>
    <lineage>
        <taxon>Bacteria</taxon>
        <taxon>Bacillati</taxon>
        <taxon>Actinomycetota</taxon>
        <taxon>Actinomycetes</taxon>
        <taxon>Mycobacteriales</taxon>
        <taxon>Mycobacteriaceae</taxon>
        <taxon>Mycobacterium</taxon>
        <taxon>Mycobacterium tuberculosis complex</taxon>
    </lineage>
</organism>
<accession>P64836</accession>
<accession>A0A1R3XYM3</accession>
<accession>P71666</accession>
<accession>X2BHT5</accession>
<gene>
    <name type="ordered locus">BQ2027_MB1433C</name>
</gene>
<dbReference type="EMBL" id="LT708304">
    <property type="protein sequence ID" value="SIU00036.1"/>
    <property type="molecule type" value="Genomic_DNA"/>
</dbReference>
<dbReference type="RefSeq" id="NP_855085.1">
    <property type="nucleotide sequence ID" value="NC_002945.3"/>
</dbReference>
<dbReference type="RefSeq" id="WP_003407272.1">
    <property type="nucleotide sequence ID" value="NC_002945.4"/>
</dbReference>
<dbReference type="SMR" id="P64836"/>
<dbReference type="KEGG" id="mbo:BQ2027_MB1433C"/>
<dbReference type="PATRIC" id="fig|233413.5.peg.1568"/>
<dbReference type="Proteomes" id="UP000001419">
    <property type="component" value="Chromosome"/>
</dbReference>
<dbReference type="GO" id="GO:0006355">
    <property type="term" value="P:regulation of DNA-templated transcription"/>
    <property type="evidence" value="ECO:0007669"/>
    <property type="project" value="InterPro"/>
</dbReference>
<dbReference type="CDD" id="cd21631">
    <property type="entry name" value="RHH_CopG_NikR-like"/>
    <property type="match status" value="1"/>
</dbReference>
<dbReference type="Gene3D" id="1.10.1220.10">
    <property type="entry name" value="Met repressor-like"/>
    <property type="match status" value="1"/>
</dbReference>
<dbReference type="InterPro" id="IPR013321">
    <property type="entry name" value="Arc_rbn_hlx_hlx"/>
</dbReference>
<dbReference type="InterPro" id="IPR002145">
    <property type="entry name" value="CopG"/>
</dbReference>
<dbReference type="InterPro" id="IPR010985">
    <property type="entry name" value="Ribbon_hlx_hlx"/>
</dbReference>
<dbReference type="Pfam" id="PF01402">
    <property type="entry name" value="RHH_1"/>
    <property type="match status" value="1"/>
</dbReference>
<dbReference type="SUPFAM" id="SSF47598">
    <property type="entry name" value="Ribbon-helix-helix"/>
    <property type="match status" value="1"/>
</dbReference>